<sequence length="245" mass="28287">MRYKITIEYNGSNFIGWQKQKHSSNSIQEILENAILKFSQQHTTVYVAGRTDAGVHALGQVAHFDLTTNLDTYVVRNAINYHLIPHAIAILSVEKTDDKFHARFSAKKRHYLYKIINRYSPLTIDYNRAWLIHNPLNIENMIQAIEYIKGNHDFSSFRARHCQSKNPIKTIDDLKIIHNNQSINIHISAISFLHHQVRIIVGTLVECGKNNFSPEHIKNILKAKNRSYAGMTAPPYGLYFVKVDY</sequence>
<organism>
    <name type="scientific">Ehrlichia chaffeensis (strain ATCC CRL-10679 / Arkansas)</name>
    <dbReference type="NCBI Taxonomy" id="205920"/>
    <lineage>
        <taxon>Bacteria</taxon>
        <taxon>Pseudomonadati</taxon>
        <taxon>Pseudomonadota</taxon>
        <taxon>Alphaproteobacteria</taxon>
        <taxon>Rickettsiales</taxon>
        <taxon>Anaplasmataceae</taxon>
        <taxon>Ehrlichia</taxon>
    </lineage>
</organism>
<feature type="chain" id="PRO_1000017079" description="tRNA pseudouridine synthase A">
    <location>
        <begin position="1"/>
        <end position="245"/>
    </location>
</feature>
<feature type="active site" description="Nucleophile" evidence="1">
    <location>
        <position position="52"/>
    </location>
</feature>
<feature type="binding site" evidence="1">
    <location>
        <position position="111"/>
    </location>
    <ligand>
        <name>substrate</name>
    </ligand>
</feature>
<name>TRUA_EHRCR</name>
<gene>
    <name evidence="1" type="primary">truA</name>
    <name type="ordered locus">ECH_0622</name>
</gene>
<evidence type="ECO:0000255" key="1">
    <source>
        <dbReference type="HAMAP-Rule" id="MF_00171"/>
    </source>
</evidence>
<comment type="function">
    <text evidence="1">Formation of pseudouridine at positions 38, 39 and 40 in the anticodon stem and loop of transfer RNAs.</text>
</comment>
<comment type="catalytic activity">
    <reaction evidence="1">
        <text>uridine(38/39/40) in tRNA = pseudouridine(38/39/40) in tRNA</text>
        <dbReference type="Rhea" id="RHEA:22376"/>
        <dbReference type="Rhea" id="RHEA-COMP:10085"/>
        <dbReference type="Rhea" id="RHEA-COMP:10087"/>
        <dbReference type="ChEBI" id="CHEBI:65314"/>
        <dbReference type="ChEBI" id="CHEBI:65315"/>
        <dbReference type="EC" id="5.4.99.12"/>
    </reaction>
</comment>
<comment type="subunit">
    <text evidence="1">Homodimer.</text>
</comment>
<comment type="similarity">
    <text evidence="1">Belongs to the tRNA pseudouridine synthase TruA family.</text>
</comment>
<proteinExistence type="inferred from homology"/>
<reference key="1">
    <citation type="journal article" date="2006" name="PLoS Genet.">
        <title>Comparative genomics of emerging human ehrlichiosis agents.</title>
        <authorList>
            <person name="Dunning Hotopp J.C."/>
            <person name="Lin M."/>
            <person name="Madupu R."/>
            <person name="Crabtree J."/>
            <person name="Angiuoli S.V."/>
            <person name="Eisen J.A."/>
            <person name="Seshadri R."/>
            <person name="Ren Q."/>
            <person name="Wu M."/>
            <person name="Utterback T.R."/>
            <person name="Smith S."/>
            <person name="Lewis M."/>
            <person name="Khouri H."/>
            <person name="Zhang C."/>
            <person name="Niu H."/>
            <person name="Lin Q."/>
            <person name="Ohashi N."/>
            <person name="Zhi N."/>
            <person name="Nelson W.C."/>
            <person name="Brinkac L.M."/>
            <person name="Dodson R.J."/>
            <person name="Rosovitz M.J."/>
            <person name="Sundaram J.P."/>
            <person name="Daugherty S.C."/>
            <person name="Davidsen T."/>
            <person name="Durkin A.S."/>
            <person name="Gwinn M.L."/>
            <person name="Haft D.H."/>
            <person name="Selengut J.D."/>
            <person name="Sullivan S.A."/>
            <person name="Zafar N."/>
            <person name="Zhou L."/>
            <person name="Benahmed F."/>
            <person name="Forberger H."/>
            <person name="Halpin R."/>
            <person name="Mulligan S."/>
            <person name="Robinson J."/>
            <person name="White O."/>
            <person name="Rikihisa Y."/>
            <person name="Tettelin H."/>
        </authorList>
    </citation>
    <scope>NUCLEOTIDE SEQUENCE [LARGE SCALE GENOMIC DNA]</scope>
    <source>
        <strain>ATCC CRL-10679 / Arkansas</strain>
    </source>
</reference>
<protein>
    <recommendedName>
        <fullName evidence="1">tRNA pseudouridine synthase A</fullName>
        <ecNumber evidence="1">5.4.99.12</ecNumber>
    </recommendedName>
    <alternativeName>
        <fullName evidence="1">tRNA pseudouridine(38-40) synthase</fullName>
    </alternativeName>
    <alternativeName>
        <fullName evidence="1">tRNA pseudouridylate synthase I</fullName>
    </alternativeName>
    <alternativeName>
        <fullName evidence="1">tRNA-uridine isomerase I</fullName>
    </alternativeName>
</protein>
<keyword id="KW-0413">Isomerase</keyword>
<keyword id="KW-1185">Reference proteome</keyword>
<keyword id="KW-0819">tRNA processing</keyword>
<accession>Q2GGK1</accession>
<dbReference type="EC" id="5.4.99.12" evidence="1"/>
<dbReference type="EMBL" id="CP000236">
    <property type="protein sequence ID" value="ABD44963.1"/>
    <property type="molecule type" value="Genomic_DNA"/>
</dbReference>
<dbReference type="RefSeq" id="WP_006010921.1">
    <property type="nucleotide sequence ID" value="NC_007799.1"/>
</dbReference>
<dbReference type="SMR" id="Q2GGK1"/>
<dbReference type="STRING" id="205920.ECH_0622"/>
<dbReference type="KEGG" id="ech:ECH_0622"/>
<dbReference type="eggNOG" id="COG0101">
    <property type="taxonomic scope" value="Bacteria"/>
</dbReference>
<dbReference type="HOGENOM" id="CLU_014673_0_2_5"/>
<dbReference type="OrthoDB" id="9811823at2"/>
<dbReference type="Proteomes" id="UP000008320">
    <property type="component" value="Chromosome"/>
</dbReference>
<dbReference type="GO" id="GO:0003723">
    <property type="term" value="F:RNA binding"/>
    <property type="evidence" value="ECO:0007669"/>
    <property type="project" value="InterPro"/>
</dbReference>
<dbReference type="GO" id="GO:0160147">
    <property type="term" value="F:tRNA pseudouridine(38-40) synthase activity"/>
    <property type="evidence" value="ECO:0007669"/>
    <property type="project" value="UniProtKB-EC"/>
</dbReference>
<dbReference type="GO" id="GO:0031119">
    <property type="term" value="P:tRNA pseudouridine synthesis"/>
    <property type="evidence" value="ECO:0007669"/>
    <property type="project" value="UniProtKB-UniRule"/>
</dbReference>
<dbReference type="CDD" id="cd02570">
    <property type="entry name" value="PseudoU_synth_EcTruA"/>
    <property type="match status" value="1"/>
</dbReference>
<dbReference type="FunFam" id="3.30.70.580:FF:000001">
    <property type="entry name" value="tRNA pseudouridine synthase A"/>
    <property type="match status" value="1"/>
</dbReference>
<dbReference type="Gene3D" id="3.30.70.660">
    <property type="entry name" value="Pseudouridine synthase I, catalytic domain, C-terminal subdomain"/>
    <property type="match status" value="1"/>
</dbReference>
<dbReference type="Gene3D" id="3.30.70.580">
    <property type="entry name" value="Pseudouridine synthase I, catalytic domain, N-terminal subdomain"/>
    <property type="match status" value="1"/>
</dbReference>
<dbReference type="HAMAP" id="MF_00171">
    <property type="entry name" value="TruA"/>
    <property type="match status" value="1"/>
</dbReference>
<dbReference type="InterPro" id="IPR020103">
    <property type="entry name" value="PsdUridine_synth_cat_dom_sf"/>
</dbReference>
<dbReference type="InterPro" id="IPR001406">
    <property type="entry name" value="PsdUridine_synth_TruA"/>
</dbReference>
<dbReference type="InterPro" id="IPR020097">
    <property type="entry name" value="PsdUridine_synth_TruA_a/b_dom"/>
</dbReference>
<dbReference type="InterPro" id="IPR020095">
    <property type="entry name" value="PsdUridine_synth_TruA_C"/>
</dbReference>
<dbReference type="InterPro" id="IPR020094">
    <property type="entry name" value="TruA/RsuA/RluB/E/F_N"/>
</dbReference>
<dbReference type="NCBIfam" id="TIGR00071">
    <property type="entry name" value="hisT_truA"/>
    <property type="match status" value="1"/>
</dbReference>
<dbReference type="PANTHER" id="PTHR11142">
    <property type="entry name" value="PSEUDOURIDYLATE SYNTHASE"/>
    <property type="match status" value="1"/>
</dbReference>
<dbReference type="PANTHER" id="PTHR11142:SF0">
    <property type="entry name" value="TRNA PSEUDOURIDINE SYNTHASE-LIKE 1"/>
    <property type="match status" value="1"/>
</dbReference>
<dbReference type="Pfam" id="PF01416">
    <property type="entry name" value="PseudoU_synth_1"/>
    <property type="match status" value="2"/>
</dbReference>
<dbReference type="PIRSF" id="PIRSF001430">
    <property type="entry name" value="tRNA_psdUrid_synth"/>
    <property type="match status" value="1"/>
</dbReference>
<dbReference type="SUPFAM" id="SSF55120">
    <property type="entry name" value="Pseudouridine synthase"/>
    <property type="match status" value="1"/>
</dbReference>